<feature type="signal peptide">
    <location>
        <begin position="1"/>
        <end position="24"/>
    </location>
</feature>
<feature type="chain" id="PRO_0000000061" description="Alpha-1-inhibitor 3">
    <location>
        <begin position="25"/>
        <end position="1477"/>
    </location>
</feature>
<feature type="region of interest" description="Bait region (approximate)">
    <location>
        <begin position="601"/>
        <end position="750"/>
    </location>
</feature>
<feature type="glycosylation site" description="N-linked (GlcNAc...) asparagine" evidence="2">
    <location>
        <position position="55"/>
    </location>
</feature>
<feature type="glycosylation site" description="N-linked (GlcNAc...) asparagine" evidence="2">
    <location>
        <position position="247"/>
    </location>
</feature>
<feature type="glycosylation site" description="N-linked (GlcNAc...) asparagine" evidence="2">
    <location>
        <position position="301"/>
    </location>
</feature>
<feature type="glycosylation site" description="N-linked (GlcNAc...) asparagine" evidence="2">
    <location>
        <position position="321"/>
    </location>
</feature>
<feature type="glycosylation site" description="N-linked (GlcNAc...) asparagine" evidence="2">
    <location>
        <position position="393"/>
    </location>
</feature>
<feature type="glycosylation site" description="N-linked (GlcNAc...) asparagine" evidence="2">
    <location>
        <position position="508"/>
    </location>
</feature>
<feature type="glycosylation site" description="N-linked (GlcNAc...) asparagine" evidence="2">
    <location>
        <position position="750"/>
    </location>
</feature>
<feature type="glycosylation site" description="N-linked (GlcNAc...) asparagine" evidence="2">
    <location>
        <position position="777"/>
    </location>
</feature>
<feature type="glycosylation site" description="N-linked (GlcNAc...) asparagine" evidence="2">
    <location>
        <position position="872"/>
    </location>
</feature>
<feature type="glycosylation site" description="N-linked (GlcNAc...) asparagine" evidence="2">
    <location>
        <position position="994"/>
    </location>
</feature>
<feature type="glycosylation site" description="N-linked (GlcNAc...) asparagine" evidence="2">
    <location>
        <position position="1143"/>
    </location>
</feature>
<feature type="glycosylation site" description="N-linked (GlcNAc...) asparagine" evidence="2">
    <location>
        <position position="1314"/>
    </location>
</feature>
<feature type="glycosylation site" description="N-linked (GlcNAc...) asparagine" evidence="2">
    <location>
        <position position="1427"/>
    </location>
</feature>
<feature type="disulfide bond" evidence="1">
    <location>
        <begin position="48"/>
        <end position="86"/>
    </location>
</feature>
<feature type="disulfide bond" evidence="1">
    <location>
        <begin position="251"/>
        <end position="295"/>
    </location>
</feature>
<feature type="disulfide bond" evidence="1">
    <location>
        <begin position="269"/>
        <end position="283"/>
    </location>
</feature>
<feature type="disulfide bond" evidence="1">
    <location>
        <begin position="468"/>
        <end position="563"/>
    </location>
</feature>
<feature type="disulfide bond" evidence="1">
    <location>
        <begin position="595"/>
        <end position="774"/>
    </location>
</feature>
<feature type="disulfide bond" evidence="1">
    <location>
        <begin position="643"/>
        <end position="678"/>
    </location>
</feature>
<feature type="disulfide bond" evidence="1">
    <location>
        <begin position="850"/>
        <end position="886"/>
    </location>
</feature>
<feature type="disulfide bond" evidence="1">
    <location>
        <begin position="924"/>
        <end position="1324"/>
    </location>
</feature>
<feature type="disulfide bond" evidence="1">
    <location>
        <begin position="1082"/>
        <end position="1130"/>
    </location>
</feature>
<feature type="disulfide bond" evidence="1">
    <location>
        <begin position="1355"/>
        <end position="1470"/>
    </location>
</feature>
<feature type="cross-link" description="Isoglutamyl cysteine thioester (Cys-Gln)">
    <location>
        <begin position="975"/>
        <end position="978"/>
    </location>
</feature>
<feature type="sequence conflict" description="In Ref. 3; AA sequence." evidence="3" ref="3">
    <original>Y</original>
    <variation>T</variation>
    <location>
        <position position="677"/>
    </location>
</feature>
<feature type="sequence conflict" description="In Ref. 5; AAH98768." evidence="3" ref="5">
    <original>M</original>
    <variation>T</variation>
    <location>
        <position position="1373"/>
    </location>
</feature>
<feature type="sequence conflict" description="In Ref. 5; AAA63494." evidence="3" ref="5">
    <original>G</original>
    <variation>E</variation>
    <location>
        <position position="1406"/>
    </location>
</feature>
<feature type="sequence conflict" description="In Ref. 5; AAA63494." evidence="3" ref="5">
    <original>D</original>
    <variation>N</variation>
    <location>
        <position position="1474"/>
    </location>
</feature>
<sequence length="1477" mass="163773">MKKDREAQLCLFSALLAFLPFASLLNGNSKYMVLVPSQLYTETPEKICLHLYHLNETVTVTASLISQRGTRKLFDELVVDKDLFHCVSFTIPRLPSSEEEESLDINIEGAKHKFSERRVVLVKNKESVVFVQTDKPMYKPGQSVKFRVVSMDKNLHPLNELFPLAYIEDPKMNRIMQWQDVKTENGLKQLSFSLSAEPIQGPYKIVILKQSGVKEEHSFTVMEFVLPRFGVDVKVPNAISVYDEIINVTACATYTYGKPVPGHVKISLCHGNPTFSSETKSGCKEEDSRLDNNGCSTQEVNITEFQLKENYLKMHQAFHVNATVTEEGTGSEFSGSGRIEVERTRNKFLFLKADSHFRHGIPFFVKVRLVDIKGDPIPNEQVLIKARDAGYTNATTTDQHGLAKFSIDTNGISDYSLNIKVYHKEESSCIHSSCTAERHAEAHHTAYAVYSLSKSYIYLDTEAGVLPCNQIHTVQAHFILKGQVLGVLQQIVFHYLVMAQGSILQTGNHTHQVEPGESQVQGNFALEIPVEFSMVPVAKMLIYTILPDGEVIADSVKFQVEKCLRNKVHLSFSPSQSLPASQTHMRVTASPQSLCGLRAVDQSVLLQKPEAELSPSLIYDLPGMQDSNFIASSNDPFEDEDYCLMYQPIAREKDVYRYVRETGLMAFTNLKIKLPTYCNTDYDMVPLAVPAVALDSSTDRGMYESLPVVAVKSPLPQEPPRKDPPPKDPVIETIRNYFPETWIWDLVTVNSSGVTELEMTVPDTITEWKAGALCLSNDTGLGLSSVASFQAFQPFFVELTMPYSVIRGEAFTLKATVLNYLPTSLPMAVLLEASPDFTAVPVENNQDSYCLGANGRHTSSWLVTPKSLGNVNFSVSAEARQSPGPCGSEVATVPETGRKDTVVKVLIVEPEGIKKEHTFSSLLCASDAELSETLSLLLPPTVVKDSARAHFSVMGDILSSAIKNTQNLIQMPYGCGEQNMVLFAPNIYVLKYLNETQQLTEKIKSKALGYLRAGYQRELNYKHKDGSYSAFGDHNGQGQGNTWLTAFVLKSFAQARAFIFIDESHITDAFTWLSKQQKDSGCFRSSGSLLNNAMKGGVDDEITLSAYITMALLESSLPDTDPVVSKALSCLESSWENIEQGGNGSFVYTKALMAYAFALAGNQEKRNEILKSLDKEAIKEDNSIHWERPQKPTKSEGYLYTPQASSAEVEMSAYVVLARLTAQPAPSPEDLALSMGTIKWLTKQQNSYGGFSSTQDTVVALDALSKYGAATFSKSQKTPSVTVQSSGSFSQKFQVDKSNRLLLQQVSLPYIPGNYTVSVSGEGCVYAQTTLRYNVPLEKQQPAFALKVQTVPLTCNNPKGQNSFQISLEISYMGSRPASNMVIADVKMLSGFIPLKPTVKKLERLGHVSRTEVTTNNVLLYLDQVTNQTLSFSFIIQQDIPVKNLQPAIVKVYDYYETDEVAFAEYSSPCSSDDQNV</sequence>
<protein>
    <recommendedName>
        <fullName>Alpha-1-inhibitor 3</fullName>
    </recommendedName>
    <alternativeName>
        <fullName>Alpha-1-inhibitor 3 variant II</fullName>
        <shortName>Alpha-1-inhibitor III</shortName>
    </alternativeName>
</protein>
<proteinExistence type="evidence at protein level"/>
<evidence type="ECO:0000250" key="1"/>
<evidence type="ECO:0000255" key="2"/>
<evidence type="ECO:0000305" key="3"/>
<keyword id="KW-0082">Bait region</keyword>
<keyword id="KW-0903">Direct protein sequencing</keyword>
<keyword id="KW-1015">Disulfide bond</keyword>
<keyword id="KW-0325">Glycoprotein</keyword>
<keyword id="KW-0646">Protease inhibitor</keyword>
<keyword id="KW-1185">Reference proteome</keyword>
<keyword id="KW-0964">Secreted</keyword>
<keyword id="KW-0722">Serine protease inhibitor</keyword>
<keyword id="KW-0732">Signal</keyword>
<keyword id="KW-0882">Thioester bond</keyword>
<reference key="1">
    <citation type="journal article" date="1988" name="J. Biol. Chem.">
        <title>Sequence and acute phase regulation of rat alpha 1-inhibitor III messenger RNA.</title>
        <authorList>
            <person name="Braciak T.A."/>
            <person name="Northemann W."/>
            <person name="Hudson G.O."/>
            <person name="Shiels B.R."/>
            <person name="Gehring M.R."/>
            <person name="Fey G.H."/>
        </authorList>
    </citation>
    <scope>NUCLEOTIDE SEQUENCE [MRNA]</scope>
    <scope>PARTIAL PROTEIN SEQUENCE</scope>
    <source>
        <tissue>Liver</tissue>
    </source>
</reference>
<reference key="2">
    <citation type="journal article" date="1989" name="Biochemistry">
        <title>Structure and negative transcriptional regulation by glucocorticoids of the acute-phase rat alpha 1-inhibitor III gene.</title>
        <authorList>
            <person name="Northemann W."/>
            <person name="Shiels B.R."/>
            <person name="Braciak T.A."/>
            <person name="Fey G.H."/>
        </authorList>
    </citation>
    <scope>NUCLEOTIDE SEQUENCE [GENOMIC DNA] OF 1-143</scope>
    <source>
        <strain>Fischer 344</strain>
        <tissue>Liver</tissue>
    </source>
</reference>
<reference key="3">
    <citation type="journal article" date="1989" name="J. Biol. Chem.">
        <title>Proteinase binding and inhibition by the monomeric alpha-macroglobulin rat alpha 1-inhibitor-3.</title>
        <authorList>
            <person name="Enghild J.J."/>
            <person name="Salvesen G."/>
            <person name="Thogersen I.B."/>
            <person name="Pizzo S.V."/>
        </authorList>
    </citation>
    <scope>PROTEIN SEQUENCE OF 673-723</scope>
</reference>
<reference key="4">
    <citation type="journal article" date="2004" name="Genome Res.">
        <title>The status, quality, and expansion of the NIH full-length cDNA project: the Mammalian Gene Collection (MGC).</title>
        <authorList>
            <consortium name="The MGC Project Team"/>
        </authorList>
    </citation>
    <scope>NUCLEOTIDE SEQUENCE [LARGE SCALE MRNA] OF 757-1477</scope>
    <source>
        <tissue>Liver</tissue>
    </source>
</reference>
<reference key="5">
    <citation type="journal article" date="1987" name="Eur. J. Biochem.">
        <title>Identification and sequencing of cDNA clones for the rodent negative acute-phase protein alpha 1-inhibitor 3.</title>
        <authorList>
            <person name="Schweizer M."/>
            <person name="Takabayashi K."/>
            <person name="Geiger T."/>
            <person name="Laux T."/>
            <person name="Biermann G."/>
            <person name="Buhler J.M."/>
            <person name="Gauthier F."/>
            <person name="Roberts L.M."/>
            <person name="Heinrich P.C."/>
        </authorList>
    </citation>
    <scope>NUCLEOTIDE SEQUENCE [MRNA] OF 1253-1477</scope>
    <source>
        <tissue>Liver</tissue>
    </source>
</reference>
<reference key="6">
    <citation type="journal article" date="2012" name="Nat. Commun.">
        <title>Quantitative maps of protein phosphorylation sites across 14 different rat organs and tissues.</title>
        <authorList>
            <person name="Lundby A."/>
            <person name="Secher A."/>
            <person name="Lage K."/>
            <person name="Nordsborg N.B."/>
            <person name="Dmytriyev A."/>
            <person name="Lundby C."/>
            <person name="Olsen J.V."/>
        </authorList>
    </citation>
    <scope>IDENTIFICATION BY MASS SPECTROMETRY [LARGE SCALE ANALYSIS]</scope>
</reference>
<organism>
    <name type="scientific">Rattus norvegicus</name>
    <name type="common">Rat</name>
    <dbReference type="NCBI Taxonomy" id="10116"/>
    <lineage>
        <taxon>Eukaryota</taxon>
        <taxon>Metazoa</taxon>
        <taxon>Chordata</taxon>
        <taxon>Craniata</taxon>
        <taxon>Vertebrata</taxon>
        <taxon>Euteleostomi</taxon>
        <taxon>Mammalia</taxon>
        <taxon>Eutheria</taxon>
        <taxon>Euarchontoglires</taxon>
        <taxon>Glires</taxon>
        <taxon>Rodentia</taxon>
        <taxon>Myomorpha</taxon>
        <taxon>Muroidea</taxon>
        <taxon>Muridae</taxon>
        <taxon>Murinae</taxon>
        <taxon>Rattus</taxon>
    </lineage>
</organism>
<accession>P14046</accession>
<accession>Q4G042</accession>
<accession>Q63266</accession>
<accession>Q6LDP2</accession>
<accession>Q6LDR8</accession>
<comment type="function">
    <text>Protease inhibitor with a wide spectrum of protein targets, which attaches through its thioester function.</text>
</comment>
<comment type="subunit">
    <text>Monomer.</text>
</comment>
<comment type="subcellular location">
    <subcellularLocation>
        <location>Secreted</location>
    </subcellularLocation>
</comment>
<comment type="similarity">
    <text evidence="3">Belongs to the protease inhibitor I39 (alpha-2-macroglobulin) family.</text>
</comment>
<gene>
    <name type="primary">A1i3</name>
</gene>
<dbReference type="EMBL" id="J03552">
    <property type="protein sequence ID" value="AAA40628.1"/>
    <property type="molecule type" value="mRNA"/>
</dbReference>
<dbReference type="EMBL" id="M22993">
    <property type="protein sequence ID" value="AAA79025.1"/>
    <property type="molecule type" value="Genomic_DNA"/>
</dbReference>
<dbReference type="EMBL" id="BC098768">
    <property type="protein sequence ID" value="AAH98768.1"/>
    <property type="molecule type" value="mRNA"/>
</dbReference>
<dbReference type="EMBL" id="M28297">
    <property type="protein sequence ID" value="AAA63493.1"/>
    <property type="molecule type" value="mRNA"/>
</dbReference>
<dbReference type="EMBL" id="M28298">
    <property type="protein sequence ID" value="AAA63494.1"/>
    <property type="molecule type" value="mRNA"/>
</dbReference>
<dbReference type="PIR" id="A29952">
    <property type="entry name" value="A29952"/>
</dbReference>
<dbReference type="SMR" id="P14046"/>
<dbReference type="FunCoup" id="P14046">
    <property type="interactions" value="91"/>
</dbReference>
<dbReference type="IntAct" id="P14046">
    <property type="interactions" value="1"/>
</dbReference>
<dbReference type="MEROPS" id="I39.004"/>
<dbReference type="GlyCosmos" id="P14046">
    <property type="glycosylation" value="13 sites, 1 glycan"/>
</dbReference>
<dbReference type="GlyGen" id="P14046">
    <property type="glycosylation" value="14 sites, 2 N-linked glycans (2 sites), 1 O-linked glycan (1 site)"/>
</dbReference>
<dbReference type="iPTMnet" id="P14046"/>
<dbReference type="PhosphoSitePlus" id="P14046"/>
<dbReference type="PaxDb" id="10116-ENSRNOP00000040516"/>
<dbReference type="AGR" id="RGD:1584999"/>
<dbReference type="RGD" id="1584999">
    <property type="gene designation" value="LOC297568"/>
</dbReference>
<dbReference type="eggNOG" id="KOG1366">
    <property type="taxonomic scope" value="Eukaryota"/>
</dbReference>
<dbReference type="InParanoid" id="P14046"/>
<dbReference type="PhylomeDB" id="P14046"/>
<dbReference type="PRO" id="PR:P14046"/>
<dbReference type="Proteomes" id="UP000002494">
    <property type="component" value="Unplaced"/>
</dbReference>
<dbReference type="GO" id="GO:0005615">
    <property type="term" value="C:extracellular space"/>
    <property type="evidence" value="ECO:0007669"/>
    <property type="project" value="InterPro"/>
</dbReference>
<dbReference type="GO" id="GO:0004866">
    <property type="term" value="F:endopeptidase inhibitor activity"/>
    <property type="evidence" value="ECO:0000318"/>
    <property type="project" value="GO_Central"/>
</dbReference>
<dbReference type="GO" id="GO:0002020">
    <property type="term" value="F:protease binding"/>
    <property type="evidence" value="ECO:0000318"/>
    <property type="project" value="GO_Central"/>
</dbReference>
<dbReference type="GO" id="GO:0004867">
    <property type="term" value="F:serine-type endopeptidase inhibitor activity"/>
    <property type="evidence" value="ECO:0007669"/>
    <property type="project" value="UniProtKB-KW"/>
</dbReference>
<dbReference type="CDD" id="cd02897">
    <property type="entry name" value="A2M_2"/>
    <property type="match status" value="1"/>
</dbReference>
<dbReference type="FunFam" id="2.60.40.10:FF:000312">
    <property type="entry name" value="Alpha-2-macroglobulin like 1"/>
    <property type="match status" value="1"/>
</dbReference>
<dbReference type="FunFam" id="1.50.10.20:FF:000001">
    <property type="entry name" value="CD109 isoform 1"/>
    <property type="match status" value="1"/>
</dbReference>
<dbReference type="FunFam" id="2.60.40.1930:FF:000001">
    <property type="entry name" value="CD109 isoform 3"/>
    <property type="match status" value="1"/>
</dbReference>
<dbReference type="FunFam" id="2.60.40.10:FF:001760">
    <property type="entry name" value="Murinoglobulin-1"/>
    <property type="match status" value="1"/>
</dbReference>
<dbReference type="FunFam" id="2.60.40.1940:FF:000007">
    <property type="entry name" value="Murinoglobulin-1"/>
    <property type="match status" value="1"/>
</dbReference>
<dbReference type="FunFam" id="2.20.130.20:FF:000004">
    <property type="entry name" value="PZP, alpha-2-macroglobulin like"/>
    <property type="match status" value="1"/>
</dbReference>
<dbReference type="FunFam" id="2.60.40.1930:FF:000002">
    <property type="entry name" value="PZP, alpha-2-macroglobulin like"/>
    <property type="match status" value="1"/>
</dbReference>
<dbReference type="FunFam" id="2.60.40.690:FF:000001">
    <property type="entry name" value="PZP, alpha-2-macroglobulin like"/>
    <property type="match status" value="1"/>
</dbReference>
<dbReference type="Gene3D" id="1.50.10.20">
    <property type="match status" value="1"/>
</dbReference>
<dbReference type="Gene3D" id="2.20.130.20">
    <property type="match status" value="1"/>
</dbReference>
<dbReference type="Gene3D" id="2.60.120.1540">
    <property type="match status" value="1"/>
</dbReference>
<dbReference type="Gene3D" id="2.60.40.1930">
    <property type="match status" value="2"/>
</dbReference>
<dbReference type="Gene3D" id="2.60.40.1940">
    <property type="match status" value="1"/>
</dbReference>
<dbReference type="Gene3D" id="2.60.40.690">
    <property type="entry name" value="Alpha-macroglobulin, receptor-binding domain"/>
    <property type="match status" value="1"/>
</dbReference>
<dbReference type="Gene3D" id="2.60.40.10">
    <property type="entry name" value="Immunoglobulins"/>
    <property type="match status" value="2"/>
</dbReference>
<dbReference type="InterPro" id="IPR009048">
    <property type="entry name" value="A-macroglobulin_rcpt-bd"/>
</dbReference>
<dbReference type="InterPro" id="IPR036595">
    <property type="entry name" value="A-macroglobulin_rcpt-bd_sf"/>
</dbReference>
<dbReference type="InterPro" id="IPR050473">
    <property type="entry name" value="A2M/Complement_sys"/>
</dbReference>
<dbReference type="InterPro" id="IPR011625">
    <property type="entry name" value="A2M_N_BRD"/>
</dbReference>
<dbReference type="InterPro" id="IPR041813">
    <property type="entry name" value="A2M_TED"/>
</dbReference>
<dbReference type="InterPro" id="IPR047565">
    <property type="entry name" value="Alpha-macroglob_thiol-ester_cl"/>
</dbReference>
<dbReference type="InterPro" id="IPR011626">
    <property type="entry name" value="Alpha-macroglobulin_TED"/>
</dbReference>
<dbReference type="InterPro" id="IPR013783">
    <property type="entry name" value="Ig-like_fold"/>
</dbReference>
<dbReference type="InterPro" id="IPR014756">
    <property type="entry name" value="Ig_E-set"/>
</dbReference>
<dbReference type="InterPro" id="IPR001599">
    <property type="entry name" value="Macroglobln_a2"/>
</dbReference>
<dbReference type="InterPro" id="IPR019742">
    <property type="entry name" value="MacrogloblnA2_CS"/>
</dbReference>
<dbReference type="InterPro" id="IPR002890">
    <property type="entry name" value="MG2"/>
</dbReference>
<dbReference type="InterPro" id="IPR041555">
    <property type="entry name" value="MG3"/>
</dbReference>
<dbReference type="InterPro" id="IPR040839">
    <property type="entry name" value="MG4"/>
</dbReference>
<dbReference type="InterPro" id="IPR008930">
    <property type="entry name" value="Terpenoid_cyclase/PrenylTrfase"/>
</dbReference>
<dbReference type="InterPro" id="IPR010916">
    <property type="entry name" value="TonB_box_CS"/>
</dbReference>
<dbReference type="PANTHER" id="PTHR11412">
    <property type="entry name" value="MACROGLOBULIN / COMPLEMENT"/>
    <property type="match status" value="1"/>
</dbReference>
<dbReference type="PANTHER" id="PTHR11412:SF133">
    <property type="entry name" value="MURINOGLOBULIN-1-RELATED"/>
    <property type="match status" value="1"/>
</dbReference>
<dbReference type="Pfam" id="PF00207">
    <property type="entry name" value="A2M"/>
    <property type="match status" value="1"/>
</dbReference>
<dbReference type="Pfam" id="PF07703">
    <property type="entry name" value="A2M_BRD"/>
    <property type="match status" value="1"/>
</dbReference>
<dbReference type="Pfam" id="PF07677">
    <property type="entry name" value="A2M_recep"/>
    <property type="match status" value="1"/>
</dbReference>
<dbReference type="Pfam" id="PF01835">
    <property type="entry name" value="MG2"/>
    <property type="match status" value="1"/>
</dbReference>
<dbReference type="Pfam" id="PF17791">
    <property type="entry name" value="MG3"/>
    <property type="match status" value="1"/>
</dbReference>
<dbReference type="Pfam" id="PF17789">
    <property type="entry name" value="MG4"/>
    <property type="match status" value="1"/>
</dbReference>
<dbReference type="Pfam" id="PF07678">
    <property type="entry name" value="TED_complement"/>
    <property type="match status" value="1"/>
</dbReference>
<dbReference type="SMART" id="SM01360">
    <property type="entry name" value="A2M"/>
    <property type="match status" value="1"/>
</dbReference>
<dbReference type="SMART" id="SM01359">
    <property type="entry name" value="A2M_N_2"/>
    <property type="match status" value="1"/>
</dbReference>
<dbReference type="SMART" id="SM01361">
    <property type="entry name" value="A2M_recep"/>
    <property type="match status" value="1"/>
</dbReference>
<dbReference type="SMART" id="SM01419">
    <property type="entry name" value="Thiol-ester_cl"/>
    <property type="match status" value="1"/>
</dbReference>
<dbReference type="SUPFAM" id="SSF49410">
    <property type="entry name" value="Alpha-macroglobulin receptor domain"/>
    <property type="match status" value="1"/>
</dbReference>
<dbReference type="SUPFAM" id="SSF81296">
    <property type="entry name" value="E set domains"/>
    <property type="match status" value="1"/>
</dbReference>
<dbReference type="SUPFAM" id="SSF48239">
    <property type="entry name" value="Terpenoid cyclases/Protein prenyltransferases"/>
    <property type="match status" value="1"/>
</dbReference>
<dbReference type="PROSITE" id="PS00477">
    <property type="entry name" value="ALPHA_2_MACROGLOBULIN"/>
    <property type="match status" value="1"/>
</dbReference>
<name>A1I3_RAT</name>